<dbReference type="EMBL" id="U88893">
    <property type="protein sequence ID" value="AAB53273.1"/>
    <property type="molecule type" value="mRNA"/>
</dbReference>
<dbReference type="SMR" id="P79404"/>
<dbReference type="STRING" id="9823.ENSSSCP00000029662"/>
<dbReference type="PaxDb" id="9823-ENSSSCP00000019392"/>
<dbReference type="eggNOG" id="KOG3575">
    <property type="taxonomic scope" value="Eukaryota"/>
</dbReference>
<dbReference type="InParanoid" id="P79404"/>
<dbReference type="Proteomes" id="UP000008227">
    <property type="component" value="Unplaced"/>
</dbReference>
<dbReference type="Proteomes" id="UP000314985">
    <property type="component" value="Unplaced"/>
</dbReference>
<dbReference type="Proteomes" id="UP000694570">
    <property type="component" value="Unplaced"/>
</dbReference>
<dbReference type="Proteomes" id="UP000694571">
    <property type="component" value="Unplaced"/>
</dbReference>
<dbReference type="Proteomes" id="UP000694720">
    <property type="component" value="Unplaced"/>
</dbReference>
<dbReference type="Proteomes" id="UP000694722">
    <property type="component" value="Unplaced"/>
</dbReference>
<dbReference type="Proteomes" id="UP000694723">
    <property type="component" value="Unplaced"/>
</dbReference>
<dbReference type="Proteomes" id="UP000694724">
    <property type="component" value="Unplaced"/>
</dbReference>
<dbReference type="Proteomes" id="UP000694725">
    <property type="component" value="Unplaced"/>
</dbReference>
<dbReference type="Proteomes" id="UP000694726">
    <property type="component" value="Unplaced"/>
</dbReference>
<dbReference type="Proteomes" id="UP000694727">
    <property type="component" value="Unplaced"/>
</dbReference>
<dbReference type="Proteomes" id="UP000694728">
    <property type="component" value="Unplaced"/>
</dbReference>
<dbReference type="GO" id="GO:0000785">
    <property type="term" value="C:chromatin"/>
    <property type="evidence" value="ECO:0000318"/>
    <property type="project" value="GO_Central"/>
</dbReference>
<dbReference type="GO" id="GO:0005789">
    <property type="term" value="C:endoplasmic reticulum membrane"/>
    <property type="evidence" value="ECO:0007669"/>
    <property type="project" value="UniProtKB-SubCell"/>
</dbReference>
<dbReference type="GO" id="GO:0005634">
    <property type="term" value="C:nucleus"/>
    <property type="evidence" value="ECO:0000318"/>
    <property type="project" value="GO_Central"/>
</dbReference>
<dbReference type="GO" id="GO:0034056">
    <property type="term" value="F:estrogen response element binding"/>
    <property type="evidence" value="ECO:0000318"/>
    <property type="project" value="GO_Central"/>
</dbReference>
<dbReference type="GO" id="GO:0004879">
    <property type="term" value="F:nuclear receptor activity"/>
    <property type="evidence" value="ECO:0000318"/>
    <property type="project" value="GO_Central"/>
</dbReference>
<dbReference type="GO" id="GO:0005496">
    <property type="term" value="F:steroid binding"/>
    <property type="evidence" value="ECO:0007669"/>
    <property type="project" value="UniProtKB-KW"/>
</dbReference>
<dbReference type="GO" id="GO:0030518">
    <property type="term" value="P:nuclear receptor-mediated steroid hormone signaling pathway"/>
    <property type="evidence" value="ECO:0000318"/>
    <property type="project" value="GO_Central"/>
</dbReference>
<dbReference type="GO" id="GO:0006357">
    <property type="term" value="P:regulation of transcription by RNA polymerase II"/>
    <property type="evidence" value="ECO:0000318"/>
    <property type="project" value="GO_Central"/>
</dbReference>
<dbReference type="Gene3D" id="1.10.565.10">
    <property type="entry name" value="Retinoid X Receptor"/>
    <property type="match status" value="1"/>
</dbReference>
<dbReference type="InterPro" id="IPR035500">
    <property type="entry name" value="NHR-like_dom_sf"/>
</dbReference>
<dbReference type="InterPro" id="IPR000536">
    <property type="entry name" value="Nucl_hrmn_rcpt_lig-bd"/>
</dbReference>
<dbReference type="InterPro" id="IPR050200">
    <property type="entry name" value="Nuclear_hormone_rcpt_NR3"/>
</dbReference>
<dbReference type="PANTHER" id="PTHR48092">
    <property type="entry name" value="KNIRPS-RELATED PROTEIN-RELATED"/>
    <property type="match status" value="1"/>
</dbReference>
<dbReference type="Pfam" id="PF00104">
    <property type="entry name" value="Hormone_recep"/>
    <property type="match status" value="1"/>
</dbReference>
<dbReference type="SMART" id="SM00430">
    <property type="entry name" value="HOLI"/>
    <property type="match status" value="1"/>
</dbReference>
<dbReference type="SUPFAM" id="SSF48508">
    <property type="entry name" value="Nuclear receptor ligand-binding domain"/>
    <property type="match status" value="1"/>
</dbReference>
<dbReference type="PROSITE" id="PS51843">
    <property type="entry name" value="NR_LBD"/>
    <property type="match status" value="1"/>
</dbReference>
<name>MCR_PIG</name>
<sequence length="164" mass="19695">QYSWMCLSSFALSWRSYKHTNSQFLYFAPDLVFNEEKMHQSAMYELCQGMHQISLQFVRLQLTFEEYTIMKVLLLLSTIPKDGLKSQAAFEEMRTNYIKELRKMVTRCPNNSGQSWQRFYQLTKLLDSMHDLVSDLLEFCFYTFRESQALKVEFPRCWWRSSPT</sequence>
<evidence type="ECO:0000250" key="1"/>
<evidence type="ECO:0000250" key="2">
    <source>
        <dbReference type="UniProtKB" id="P08235"/>
    </source>
</evidence>
<evidence type="ECO:0000255" key="3">
    <source>
        <dbReference type="PROSITE-ProRule" id="PRU01189"/>
    </source>
</evidence>
<evidence type="ECO:0000305" key="4"/>
<protein>
    <recommendedName>
        <fullName>Mineralocorticoid receptor</fullName>
        <shortName>MR</shortName>
    </recommendedName>
    <alternativeName>
        <fullName>Nuclear receptor subfamily 3 group C member 2</fullName>
    </alternativeName>
</protein>
<organism>
    <name type="scientific">Sus scrofa</name>
    <name type="common">Pig</name>
    <dbReference type="NCBI Taxonomy" id="9823"/>
    <lineage>
        <taxon>Eukaryota</taxon>
        <taxon>Metazoa</taxon>
        <taxon>Chordata</taxon>
        <taxon>Craniata</taxon>
        <taxon>Vertebrata</taxon>
        <taxon>Euteleostomi</taxon>
        <taxon>Mammalia</taxon>
        <taxon>Eutheria</taxon>
        <taxon>Laurasiatheria</taxon>
        <taxon>Artiodactyla</taxon>
        <taxon>Suina</taxon>
        <taxon>Suidae</taxon>
        <taxon>Sus</taxon>
    </lineage>
</organism>
<keyword id="KW-0963">Cytoplasm</keyword>
<keyword id="KW-0238">DNA-binding</keyword>
<keyword id="KW-0256">Endoplasmic reticulum</keyword>
<keyword id="KW-0446">Lipid-binding</keyword>
<keyword id="KW-0472">Membrane</keyword>
<keyword id="KW-0539">Nucleus</keyword>
<keyword id="KW-0597">Phosphoprotein</keyword>
<keyword id="KW-0675">Receptor</keyword>
<keyword id="KW-1185">Reference proteome</keyword>
<keyword id="KW-0754">Steroid-binding</keyword>
<keyword id="KW-0804">Transcription</keyword>
<keyword id="KW-0805">Transcription regulation</keyword>
<accession>P79404</accession>
<feature type="chain" id="PRO_0000053684" description="Mineralocorticoid receptor">
    <location>
        <begin position="1" status="less than"/>
        <end position="164" status="greater than"/>
    </location>
</feature>
<feature type="domain" description="NR LBD" evidence="3">
    <location>
        <begin position="1" status="less than"/>
        <end position="162"/>
    </location>
</feature>
<feature type="binding site" evidence="2">
    <location>
        <position position="15"/>
    </location>
    <ligand>
        <name>21-hydroxyprogesterone</name>
        <dbReference type="ChEBI" id="CHEBI:16973"/>
    </ligand>
</feature>
<feature type="binding site" evidence="2">
    <location>
        <position position="15"/>
    </location>
    <ligand>
        <name>aldosterone</name>
        <dbReference type="ChEBI" id="CHEBI:27584"/>
    </ligand>
</feature>
<feature type="binding site" evidence="2">
    <location>
        <position position="15"/>
    </location>
    <ligand>
        <name>progesterone</name>
        <dbReference type="ChEBI" id="CHEBI:17026"/>
    </ligand>
</feature>
<feature type="binding site" evidence="2">
    <location>
        <position position="143"/>
    </location>
    <ligand>
        <name>21-hydroxyprogesterone</name>
        <dbReference type="ChEBI" id="CHEBI:16973"/>
    </ligand>
</feature>
<feature type="binding site" evidence="2">
    <location>
        <position position="143"/>
    </location>
    <ligand>
        <name>aldosterone</name>
        <dbReference type="ChEBI" id="CHEBI:27584"/>
    </ligand>
</feature>
<feature type="binding site" evidence="2">
    <location>
        <position position="143"/>
    </location>
    <ligand>
        <name>progesterone</name>
        <dbReference type="ChEBI" id="CHEBI:17026"/>
    </ligand>
</feature>
<feature type="non-terminal residue">
    <location>
        <position position="1"/>
    </location>
</feature>
<feature type="non-terminal residue">
    <location>
        <position position="164"/>
    </location>
</feature>
<proteinExistence type="evidence at transcript level"/>
<gene>
    <name type="primary">NR3C2</name>
    <name type="synonym">MLR</name>
</gene>
<reference key="1">
    <citation type="submission" date="1997-02" db="EMBL/GenBank/DDBJ databases">
        <title>Sus scrofa mineralocorticoid receptor partial cDNA; hormone binding domain.</title>
        <authorList>
            <person name="Perreau V."/>
            <person name="Moisan M.P."/>
        </authorList>
    </citation>
    <scope>NUCLEOTIDE SEQUENCE [MRNA]</scope>
    <source>
        <strain>Large white</strain>
        <tissue>Kidney</tissue>
    </source>
</reference>
<comment type="function">
    <text evidence="1">Receptor for both mineralocorticoids (MC) such as aldosterone and glucocorticoids (GC) such as corticosterone or cortisol. Binds to mineralocorticoid response elements (MRE) and transactivates target genes. The effect of MC is to increase ion and water transport and thus raise extracellular fluid volume and blood pressure and lower potassium levels (By similarity).</text>
</comment>
<comment type="subunit">
    <text evidence="1">Heteromultimeric cytoplasmic complex with HSP90, HSP70, and FKBP4, in the absence of ligand. After ligand binding, it translocates to the nucleus and binds to DNA as a homodimer and as a heterodimer with NR3C1. Binds the coactivator NCOA2. May interact with HSD11B2 in the absence of ligand. Binds the coactivators NCOA1, TIF1 and NRIP1 (By similarity).</text>
</comment>
<comment type="subcellular location">
    <subcellularLocation>
        <location evidence="1">Cytoplasm</location>
    </subcellularLocation>
    <subcellularLocation>
        <location evidence="1">Nucleus</location>
    </subcellularLocation>
    <subcellularLocation>
        <location evidence="1">Endoplasmic reticulum membrane</location>
        <topology evidence="1">Peripheral membrane protein</topology>
    </subcellularLocation>
    <text evidence="1">Cytoplasmic and nuclear in the absence of ligand; nuclear after ligand-binding. When bound to HSD11B2, it is found associated with the endoplasmic reticulum membrane (By similarity).</text>
</comment>
<comment type="domain">
    <text>Composed of three domains: a modulating N-terminal domain, a DNA-binding domain and a C-terminal ligand-binding domain.</text>
</comment>
<comment type="PTM">
    <text evidence="1">Phosphorylated.</text>
</comment>
<comment type="similarity">
    <text evidence="4">Belongs to the nuclear hormone receptor family. NR3 subfamily.</text>
</comment>